<proteinExistence type="inferred from homology"/>
<organism>
    <name type="scientific">Mycoplasma pneumoniae (strain ATCC 29342 / M129 / Subtype 1)</name>
    <name type="common">Mycoplasmoides pneumoniae</name>
    <dbReference type="NCBI Taxonomy" id="272634"/>
    <lineage>
        <taxon>Bacteria</taxon>
        <taxon>Bacillati</taxon>
        <taxon>Mycoplasmatota</taxon>
        <taxon>Mycoplasmoidales</taxon>
        <taxon>Mycoplasmoidaceae</taxon>
        <taxon>Mycoplasmoides</taxon>
    </lineage>
</organism>
<comment type="function">
    <text evidence="1">Catalyzes the hydrolysis of inorganic pyrophosphate (PPi) forming two phosphate ions.</text>
</comment>
<comment type="catalytic activity">
    <reaction evidence="1">
        <text>diphosphate + H2O = 2 phosphate + H(+)</text>
        <dbReference type="Rhea" id="RHEA:24576"/>
        <dbReference type="ChEBI" id="CHEBI:15377"/>
        <dbReference type="ChEBI" id="CHEBI:15378"/>
        <dbReference type="ChEBI" id="CHEBI:33019"/>
        <dbReference type="ChEBI" id="CHEBI:43474"/>
        <dbReference type="EC" id="3.6.1.1"/>
    </reaction>
</comment>
<comment type="cofactor">
    <cofactor evidence="1">
        <name>Mg(2+)</name>
        <dbReference type="ChEBI" id="CHEBI:18420"/>
    </cofactor>
</comment>
<comment type="subunit">
    <text evidence="1">Homohexamer.</text>
</comment>
<comment type="subcellular location">
    <subcellularLocation>
        <location evidence="1">Cytoplasm</location>
    </subcellularLocation>
</comment>
<comment type="similarity">
    <text evidence="1">Belongs to the PPase family.</text>
</comment>
<gene>
    <name evidence="1" type="primary">ppa</name>
    <name type="ordered locus">MPN_528</name>
    <name type="ORF">MP314</name>
</gene>
<dbReference type="EC" id="3.6.1.1" evidence="1"/>
<dbReference type="EMBL" id="U00089">
    <property type="protein sequence ID" value="AAB95962.1"/>
    <property type="molecule type" value="Genomic_DNA"/>
</dbReference>
<dbReference type="PIR" id="S73640">
    <property type="entry name" value="S73640"/>
</dbReference>
<dbReference type="RefSeq" id="NP_110216.1">
    <property type="nucleotide sequence ID" value="NC_000912.1"/>
</dbReference>
<dbReference type="RefSeq" id="WP_010874884.1">
    <property type="nucleotide sequence ID" value="NZ_OU342337.1"/>
</dbReference>
<dbReference type="SMR" id="P75250"/>
<dbReference type="STRING" id="272634.MPN_528"/>
<dbReference type="EnsemblBacteria" id="AAB95962">
    <property type="protein sequence ID" value="AAB95962"/>
    <property type="gene ID" value="MPN_528"/>
</dbReference>
<dbReference type="KEGG" id="mpn:MPN_528"/>
<dbReference type="PATRIC" id="fig|272634.6.peg.587"/>
<dbReference type="HOGENOM" id="CLU_073198_1_2_14"/>
<dbReference type="OrthoDB" id="5187599at2"/>
<dbReference type="BioCyc" id="MetaCyc:MONOMER-644"/>
<dbReference type="BioCyc" id="MPNE272634:G1GJ3-871-MONOMER"/>
<dbReference type="Proteomes" id="UP000000808">
    <property type="component" value="Chromosome"/>
</dbReference>
<dbReference type="GO" id="GO:0005737">
    <property type="term" value="C:cytoplasm"/>
    <property type="evidence" value="ECO:0007669"/>
    <property type="project" value="UniProtKB-SubCell"/>
</dbReference>
<dbReference type="GO" id="GO:0004427">
    <property type="term" value="F:inorganic diphosphate phosphatase activity"/>
    <property type="evidence" value="ECO:0007669"/>
    <property type="project" value="UniProtKB-UniRule"/>
</dbReference>
<dbReference type="GO" id="GO:0000287">
    <property type="term" value="F:magnesium ion binding"/>
    <property type="evidence" value="ECO:0007669"/>
    <property type="project" value="UniProtKB-UniRule"/>
</dbReference>
<dbReference type="GO" id="GO:0006796">
    <property type="term" value="P:phosphate-containing compound metabolic process"/>
    <property type="evidence" value="ECO:0007669"/>
    <property type="project" value="InterPro"/>
</dbReference>
<dbReference type="CDD" id="cd00412">
    <property type="entry name" value="pyrophosphatase"/>
    <property type="match status" value="1"/>
</dbReference>
<dbReference type="Gene3D" id="3.90.80.10">
    <property type="entry name" value="Inorganic pyrophosphatase"/>
    <property type="match status" value="1"/>
</dbReference>
<dbReference type="HAMAP" id="MF_00209">
    <property type="entry name" value="Inorganic_PPase"/>
    <property type="match status" value="1"/>
</dbReference>
<dbReference type="InterPro" id="IPR008162">
    <property type="entry name" value="Pyrophosphatase"/>
</dbReference>
<dbReference type="InterPro" id="IPR036649">
    <property type="entry name" value="Pyrophosphatase_sf"/>
</dbReference>
<dbReference type="NCBIfam" id="NF002578">
    <property type="entry name" value="PRK02230.1"/>
    <property type="match status" value="1"/>
</dbReference>
<dbReference type="PANTHER" id="PTHR10286">
    <property type="entry name" value="INORGANIC PYROPHOSPHATASE"/>
    <property type="match status" value="1"/>
</dbReference>
<dbReference type="Pfam" id="PF00719">
    <property type="entry name" value="Pyrophosphatase"/>
    <property type="match status" value="1"/>
</dbReference>
<dbReference type="SUPFAM" id="SSF50324">
    <property type="entry name" value="Inorganic pyrophosphatase"/>
    <property type="match status" value="1"/>
</dbReference>
<dbReference type="PROSITE" id="PS00387">
    <property type="entry name" value="PPASE"/>
    <property type="match status" value="1"/>
</dbReference>
<keyword id="KW-0963">Cytoplasm</keyword>
<keyword id="KW-0378">Hydrolase</keyword>
<keyword id="KW-0460">Magnesium</keyword>
<keyword id="KW-0479">Metal-binding</keyword>
<keyword id="KW-1185">Reference proteome</keyword>
<name>IPYR_MYCPN</name>
<feature type="chain" id="PRO_0000137509" description="Inorganic pyrophosphatase">
    <location>
        <begin position="1"/>
        <end position="184"/>
    </location>
</feature>
<feature type="binding site" evidence="1">
    <location>
        <position position="19"/>
    </location>
    <ligand>
        <name>substrate</name>
    </ligand>
</feature>
<feature type="binding site" evidence="1">
    <location>
        <position position="33"/>
    </location>
    <ligand>
        <name>substrate</name>
    </ligand>
</feature>
<feature type="binding site" evidence="1">
    <location>
        <position position="45"/>
    </location>
    <ligand>
        <name>substrate</name>
    </ligand>
</feature>
<feature type="binding site" evidence="1">
    <location>
        <position position="55"/>
    </location>
    <ligand>
        <name>Mg(2+)</name>
        <dbReference type="ChEBI" id="CHEBI:18420"/>
        <label>1</label>
    </ligand>
</feature>
<feature type="binding site" evidence="1">
    <location>
        <position position="60"/>
    </location>
    <ligand>
        <name>Mg(2+)</name>
        <dbReference type="ChEBI" id="CHEBI:18420"/>
        <label>1</label>
    </ligand>
</feature>
<feature type="binding site" evidence="1">
    <location>
        <position position="60"/>
    </location>
    <ligand>
        <name>Mg(2+)</name>
        <dbReference type="ChEBI" id="CHEBI:18420"/>
        <label>2</label>
    </ligand>
</feature>
<feature type="binding site" evidence="1">
    <location>
        <position position="92"/>
    </location>
    <ligand>
        <name>Mg(2+)</name>
        <dbReference type="ChEBI" id="CHEBI:18420"/>
        <label>1</label>
    </ligand>
</feature>
<feature type="binding site" evidence="1">
    <location>
        <position position="129"/>
    </location>
    <ligand>
        <name>substrate</name>
    </ligand>
</feature>
<reference key="1">
    <citation type="journal article" date="1996" name="Nucleic Acids Res.">
        <title>Complete sequence analysis of the genome of the bacterium Mycoplasma pneumoniae.</title>
        <authorList>
            <person name="Himmelreich R."/>
            <person name="Hilbert H."/>
            <person name="Plagens H."/>
            <person name="Pirkl E."/>
            <person name="Li B.-C."/>
            <person name="Herrmann R."/>
        </authorList>
    </citation>
    <scope>NUCLEOTIDE SEQUENCE [LARGE SCALE GENOMIC DNA]</scope>
    <source>
        <strain>ATCC 29342 / M129 / Subtype 1</strain>
    </source>
</reference>
<sequence length="184" mass="21369">MDKFLIDVTVEIPKSSKIKYEYDRKTSQIRVDRILFGSESYPQNYGFIANTLDWDGDELDCFIFADQAFLPGVVVPTRIVGALEMVDDGELDTKLLGVIDCDPRYKEINSVNDLPKHRVDEIIGFLKTYKLLQKKEVIIKGVQSLEWAKKEYQVCVDLMKQYGKLPKDEFIAKMQKLHPEHYQK</sequence>
<evidence type="ECO:0000255" key="1">
    <source>
        <dbReference type="HAMAP-Rule" id="MF_00209"/>
    </source>
</evidence>
<accession>P75250</accession>
<protein>
    <recommendedName>
        <fullName evidence="1">Inorganic pyrophosphatase</fullName>
        <ecNumber evidence="1">3.6.1.1</ecNumber>
    </recommendedName>
    <alternativeName>
        <fullName evidence="1">Pyrophosphate phospho-hydrolase</fullName>
        <shortName evidence="1">PPase</shortName>
    </alternativeName>
</protein>